<proteinExistence type="inferred from homology"/>
<protein>
    <recommendedName>
        <fullName>Probable rhamnogalacturonase B</fullName>
        <shortName>RGase B</shortName>
        <shortName>RHG B</shortName>
        <ecNumber>3.2.1.171</ecNumber>
    </recommendedName>
</protein>
<feature type="signal peptide" evidence="2">
    <location>
        <begin position="1"/>
        <end position="21"/>
    </location>
</feature>
<feature type="chain" id="PRO_0000394391" description="Probable rhamnogalacturonase B">
    <location>
        <begin position="22"/>
        <end position="516"/>
    </location>
</feature>
<feature type="region of interest" description="Disordered" evidence="3">
    <location>
        <begin position="462"/>
        <end position="516"/>
    </location>
</feature>
<feature type="compositionally biased region" description="Polar residues" evidence="3">
    <location>
        <begin position="469"/>
        <end position="485"/>
    </location>
</feature>
<feature type="compositionally biased region" description="Basic residues" evidence="3">
    <location>
        <begin position="502"/>
        <end position="516"/>
    </location>
</feature>
<feature type="active site" description="Proton donor" evidence="1">
    <location>
        <position position="219"/>
    </location>
</feature>
<feature type="active site" evidence="1">
    <location>
        <position position="294"/>
    </location>
</feature>
<feature type="glycosylation site" description="N-linked (GlcNAc...) asparagine" evidence="2">
    <location>
        <position position="145"/>
    </location>
</feature>
<feature type="glycosylation site" description="N-linked (GlcNAc...) asparagine" evidence="2">
    <location>
        <position position="239"/>
    </location>
</feature>
<feature type="glycosylation site" description="N-linked (GlcNAc...) asparagine" evidence="2">
    <location>
        <position position="321"/>
    </location>
</feature>
<feature type="disulfide bond" evidence="1">
    <location>
        <begin position="42"/>
        <end position="68"/>
    </location>
</feature>
<feature type="disulfide bond" evidence="1">
    <location>
        <begin position="221"/>
        <end position="238"/>
    </location>
</feature>
<feature type="disulfide bond" evidence="1">
    <location>
        <begin position="344"/>
        <end position="350"/>
    </location>
</feature>
<feature type="disulfide bond" evidence="1">
    <location>
        <begin position="372"/>
        <end position="381"/>
    </location>
</feature>
<reference key="1">
    <citation type="journal article" date="2008" name="PLoS Genet.">
        <title>Genomic islands in the pathogenic filamentous fungus Aspergillus fumigatus.</title>
        <authorList>
            <person name="Fedorova N.D."/>
            <person name="Khaldi N."/>
            <person name="Joardar V.S."/>
            <person name="Maiti R."/>
            <person name="Amedeo P."/>
            <person name="Anderson M.J."/>
            <person name="Crabtree J."/>
            <person name="Silva J.C."/>
            <person name="Badger J.H."/>
            <person name="Albarraq A."/>
            <person name="Angiuoli S."/>
            <person name="Bussey H."/>
            <person name="Bowyer P."/>
            <person name="Cotty P.J."/>
            <person name="Dyer P.S."/>
            <person name="Egan A."/>
            <person name="Galens K."/>
            <person name="Fraser-Liggett C.M."/>
            <person name="Haas B.J."/>
            <person name="Inman J.M."/>
            <person name="Kent R."/>
            <person name="Lemieux S."/>
            <person name="Malavazi I."/>
            <person name="Orvis J."/>
            <person name="Roemer T."/>
            <person name="Ronning C.M."/>
            <person name="Sundaram J.P."/>
            <person name="Sutton G."/>
            <person name="Turner G."/>
            <person name="Venter J.C."/>
            <person name="White O.R."/>
            <person name="Whitty B.R."/>
            <person name="Youngman P."/>
            <person name="Wolfe K.H."/>
            <person name="Goldman G.H."/>
            <person name="Wortman J.R."/>
            <person name="Jiang B."/>
            <person name="Denning D.W."/>
            <person name="Nierman W.C."/>
        </authorList>
    </citation>
    <scope>NUCLEOTIDE SEQUENCE [LARGE SCALE GENOMIC DNA]</scope>
    <source>
        <strain>ATCC 1020 / DSM 3700 / CBS 544.65 / FGSC A1164 / JCM 1740 / NRRL 181 / WB 181</strain>
    </source>
</reference>
<name>RHGB_NEOFI</name>
<comment type="function">
    <text evidence="1">Pectinolytic enzymes consist of four classes of enzymes: pectine lyase, polygalacturonase, pectin methylesterase and rhamnogalacturonase. Hydrolyzes alpha-D-galacturonopyranosyl-(1,2)-alpha-L-rhamnopyranosyl linkages in the backbone of the hairy regions of pectins (By similarity).</text>
</comment>
<comment type="catalytic activity">
    <reaction>
        <text>Endohydrolysis of alpha-D-GalA-(1-&gt;2)-alpha-L-Rha glycosidic bond in the rhamnogalacturonan I backbone with initial inversion of anomeric configuration releasing oligosaccharides with beta-D-GalA at the reducing end.</text>
        <dbReference type="EC" id="3.2.1.171"/>
    </reaction>
</comment>
<comment type="subcellular location">
    <subcellularLocation>
        <location evidence="1">Secreted</location>
    </subcellularLocation>
</comment>
<comment type="similarity">
    <text evidence="4">Belongs to the glycosyl hydrolase 28 family.</text>
</comment>
<dbReference type="EC" id="3.2.1.171"/>
<dbReference type="EMBL" id="DS027696">
    <property type="protein sequence ID" value="EAW17738.1"/>
    <property type="molecule type" value="Genomic_DNA"/>
</dbReference>
<dbReference type="RefSeq" id="XP_001259635.1">
    <property type="nucleotide sequence ID" value="XM_001259634.1"/>
</dbReference>
<dbReference type="SMR" id="A1DED1"/>
<dbReference type="STRING" id="331117.A1DED1"/>
<dbReference type="GlyCosmos" id="A1DED1">
    <property type="glycosylation" value="3 sites, No reported glycans"/>
</dbReference>
<dbReference type="EnsemblFungi" id="EAW17738">
    <property type="protein sequence ID" value="EAW17738"/>
    <property type="gene ID" value="NFIA_076680"/>
</dbReference>
<dbReference type="GeneID" id="4585997"/>
<dbReference type="KEGG" id="nfi:NFIA_076680"/>
<dbReference type="VEuPathDB" id="FungiDB:NFIA_076680"/>
<dbReference type="eggNOG" id="ENOG502R2FT">
    <property type="taxonomic scope" value="Eukaryota"/>
</dbReference>
<dbReference type="HOGENOM" id="CLU_016031_7_2_1"/>
<dbReference type="OMA" id="QSKDCRN"/>
<dbReference type="OrthoDB" id="2268901at2759"/>
<dbReference type="Proteomes" id="UP000006702">
    <property type="component" value="Unassembled WGS sequence"/>
</dbReference>
<dbReference type="GO" id="GO:0005576">
    <property type="term" value="C:extracellular region"/>
    <property type="evidence" value="ECO:0007669"/>
    <property type="project" value="UniProtKB-SubCell"/>
</dbReference>
<dbReference type="GO" id="GO:0004650">
    <property type="term" value="F:polygalacturonase activity"/>
    <property type="evidence" value="ECO:0007669"/>
    <property type="project" value="InterPro"/>
</dbReference>
<dbReference type="GO" id="GO:0046576">
    <property type="term" value="F:rhamnogalacturonan alpha-L-rhamnopyranosyl-(1-&gt;4)-alpha-D-galactopyranosyluronide lyase activity"/>
    <property type="evidence" value="ECO:0000250"/>
    <property type="project" value="UniProtKB"/>
</dbReference>
<dbReference type="GO" id="GO:0071555">
    <property type="term" value="P:cell wall organization"/>
    <property type="evidence" value="ECO:0007669"/>
    <property type="project" value="UniProtKB-KW"/>
</dbReference>
<dbReference type="GO" id="GO:0045490">
    <property type="term" value="P:pectin catabolic process"/>
    <property type="evidence" value="ECO:0000250"/>
    <property type="project" value="UniProtKB"/>
</dbReference>
<dbReference type="FunFam" id="2.160.20.10:FF:000025">
    <property type="entry name" value="Probable rhamnogalacturonase B"/>
    <property type="match status" value="1"/>
</dbReference>
<dbReference type="Gene3D" id="2.160.20.10">
    <property type="entry name" value="Single-stranded right-handed beta-helix, Pectin lyase-like"/>
    <property type="match status" value="1"/>
</dbReference>
<dbReference type="InterPro" id="IPR000743">
    <property type="entry name" value="Glyco_hydro_28"/>
</dbReference>
<dbReference type="InterPro" id="IPR012334">
    <property type="entry name" value="Pectin_lyas_fold"/>
</dbReference>
<dbReference type="InterPro" id="IPR011050">
    <property type="entry name" value="Pectin_lyase_fold/virulence"/>
</dbReference>
<dbReference type="InterPro" id="IPR024535">
    <property type="entry name" value="RHGA/B-epi-like_pectate_lyase"/>
</dbReference>
<dbReference type="PANTHER" id="PTHR31736">
    <property type="match status" value="1"/>
</dbReference>
<dbReference type="PANTHER" id="PTHR31736:SF19">
    <property type="entry name" value="PECTIN LYASE SUPERFAMILY PROTEIN-RELATED"/>
    <property type="match status" value="1"/>
</dbReference>
<dbReference type="Pfam" id="PF00295">
    <property type="entry name" value="Glyco_hydro_28"/>
    <property type="match status" value="1"/>
</dbReference>
<dbReference type="Pfam" id="PF12708">
    <property type="entry name" value="Pect-lyase_RHGA_epim"/>
    <property type="match status" value="1"/>
</dbReference>
<dbReference type="SUPFAM" id="SSF51126">
    <property type="entry name" value="Pectin lyase-like"/>
    <property type="match status" value="1"/>
</dbReference>
<organism>
    <name type="scientific">Neosartorya fischeri (strain ATCC 1020 / DSM 3700 / CBS 544.65 / FGSC A1164 / JCM 1740 / NRRL 181 / WB 181)</name>
    <name type="common">Aspergillus fischerianus</name>
    <dbReference type="NCBI Taxonomy" id="331117"/>
    <lineage>
        <taxon>Eukaryota</taxon>
        <taxon>Fungi</taxon>
        <taxon>Dikarya</taxon>
        <taxon>Ascomycota</taxon>
        <taxon>Pezizomycotina</taxon>
        <taxon>Eurotiomycetes</taxon>
        <taxon>Eurotiomycetidae</taxon>
        <taxon>Eurotiales</taxon>
        <taxon>Aspergillaceae</taxon>
        <taxon>Aspergillus</taxon>
        <taxon>Aspergillus subgen. Fumigati</taxon>
    </lineage>
</organism>
<keyword id="KW-0119">Carbohydrate metabolism</keyword>
<keyword id="KW-0961">Cell wall biogenesis/degradation</keyword>
<keyword id="KW-1015">Disulfide bond</keyword>
<keyword id="KW-0325">Glycoprotein</keyword>
<keyword id="KW-0326">Glycosidase</keyword>
<keyword id="KW-0378">Hydrolase</keyword>
<keyword id="KW-0624">Polysaccharide degradation</keyword>
<keyword id="KW-1185">Reference proteome</keyword>
<keyword id="KW-0964">Secreted</keyword>
<keyword id="KW-0732">Signal</keyword>
<accession>A1DED1</accession>
<evidence type="ECO:0000250" key="1"/>
<evidence type="ECO:0000255" key="2"/>
<evidence type="ECO:0000256" key="3">
    <source>
        <dbReference type="SAM" id="MobiDB-lite"/>
    </source>
</evidence>
<evidence type="ECO:0000305" key="4"/>
<sequence length="516" mass="54800">MRLHAFTLLSLLGLVPSFAAASLSGSVGPLTSASAKAAKKTCNVLDYGAKADKKTDLGPPLAAAFAACKSGGLVYIPAGNYAMSTWVKLANGKAWALQIDGVIYRTGTDGGNMIMIEHTSDFELYSSTSSGAMQGLGYELHAANNWSGPRLLRLWDVSDFSVHDLILVDSPSFHFSIDTCSNGEVYNMAIRGGNHGGLDGVDVWSTNIWIHDVEVTNKDECVTVKSPAKNILVENIYCNLSGGCGMGSLGADTDISDITYKNIYTWNSNQMMMIKSNGGSGTVSNVVLENFIGHGNAYSLDIDSYWSSMSAVSGDGVELSNITIKNWKGTEANGAQRGPIKIICPDKVPCYNILIEDFAMWTETGSKQWYSCQSAYGSGFCLKSGSHHTSYAVTTTTVSSAPSGYSAAKMPLDLSTDFGSTQSIPIPTIPTSFYPGATPYSALMSKQSTKAAKARAVDMSVETPAAASRSEQVVQGASQETSQPAPESAGPVRSVPTGGNRPSRHRHGHHHFWIAA</sequence>
<gene>
    <name type="primary">rhgB</name>
    <name type="ORF">NFIA_076680</name>
</gene>